<evidence type="ECO:0000255" key="1">
    <source>
        <dbReference type="HAMAP-Rule" id="MF_00090"/>
    </source>
</evidence>
<dbReference type="EC" id="2.1.1.77" evidence="1"/>
<dbReference type="EMBL" id="CP001014">
    <property type="protein sequence ID" value="ACB40901.1"/>
    <property type="molecule type" value="Genomic_DNA"/>
</dbReference>
<dbReference type="RefSeq" id="WP_012351320.1">
    <property type="nucleotide sequence ID" value="NC_010525.1"/>
</dbReference>
<dbReference type="SMR" id="B1YC47"/>
<dbReference type="STRING" id="444157.Tneu_1986"/>
<dbReference type="GeneID" id="6165684"/>
<dbReference type="KEGG" id="tne:Tneu_1986"/>
<dbReference type="eggNOG" id="arCOG00976">
    <property type="taxonomic scope" value="Archaea"/>
</dbReference>
<dbReference type="HOGENOM" id="CLU_055432_2_0_2"/>
<dbReference type="OrthoDB" id="33618at2157"/>
<dbReference type="Proteomes" id="UP000001694">
    <property type="component" value="Chromosome"/>
</dbReference>
<dbReference type="GO" id="GO:0005737">
    <property type="term" value="C:cytoplasm"/>
    <property type="evidence" value="ECO:0007669"/>
    <property type="project" value="UniProtKB-SubCell"/>
</dbReference>
<dbReference type="GO" id="GO:0004719">
    <property type="term" value="F:protein-L-isoaspartate (D-aspartate) O-methyltransferase activity"/>
    <property type="evidence" value="ECO:0007669"/>
    <property type="project" value="UniProtKB-UniRule"/>
</dbReference>
<dbReference type="GO" id="GO:0032259">
    <property type="term" value="P:methylation"/>
    <property type="evidence" value="ECO:0007669"/>
    <property type="project" value="UniProtKB-KW"/>
</dbReference>
<dbReference type="GO" id="GO:0036211">
    <property type="term" value="P:protein modification process"/>
    <property type="evidence" value="ECO:0007669"/>
    <property type="project" value="UniProtKB-UniRule"/>
</dbReference>
<dbReference type="GO" id="GO:0030091">
    <property type="term" value="P:protein repair"/>
    <property type="evidence" value="ECO:0007669"/>
    <property type="project" value="UniProtKB-UniRule"/>
</dbReference>
<dbReference type="CDD" id="cd02440">
    <property type="entry name" value="AdoMet_MTases"/>
    <property type="match status" value="1"/>
</dbReference>
<dbReference type="FunFam" id="3.40.50.150:FF:000010">
    <property type="entry name" value="Protein-L-isoaspartate O-methyltransferase"/>
    <property type="match status" value="1"/>
</dbReference>
<dbReference type="Gene3D" id="3.40.50.150">
    <property type="entry name" value="Vaccinia Virus protein VP39"/>
    <property type="match status" value="1"/>
</dbReference>
<dbReference type="HAMAP" id="MF_00090">
    <property type="entry name" value="PIMT"/>
    <property type="match status" value="1"/>
</dbReference>
<dbReference type="InterPro" id="IPR000682">
    <property type="entry name" value="PCMT"/>
</dbReference>
<dbReference type="InterPro" id="IPR029063">
    <property type="entry name" value="SAM-dependent_MTases_sf"/>
</dbReference>
<dbReference type="NCBIfam" id="TIGR00080">
    <property type="entry name" value="pimt"/>
    <property type="match status" value="1"/>
</dbReference>
<dbReference type="NCBIfam" id="NF001453">
    <property type="entry name" value="PRK00312.1"/>
    <property type="match status" value="1"/>
</dbReference>
<dbReference type="PANTHER" id="PTHR11579">
    <property type="entry name" value="PROTEIN-L-ISOASPARTATE O-METHYLTRANSFERASE"/>
    <property type="match status" value="1"/>
</dbReference>
<dbReference type="PANTHER" id="PTHR11579:SF0">
    <property type="entry name" value="PROTEIN-L-ISOASPARTATE(D-ASPARTATE) O-METHYLTRANSFERASE"/>
    <property type="match status" value="1"/>
</dbReference>
<dbReference type="Pfam" id="PF01135">
    <property type="entry name" value="PCMT"/>
    <property type="match status" value="1"/>
</dbReference>
<dbReference type="SUPFAM" id="SSF53335">
    <property type="entry name" value="S-adenosyl-L-methionine-dependent methyltransferases"/>
    <property type="match status" value="1"/>
</dbReference>
<dbReference type="PROSITE" id="PS01279">
    <property type="entry name" value="PCMT"/>
    <property type="match status" value="1"/>
</dbReference>
<comment type="function">
    <text evidence="1">Catalyzes the methyl esterification of L-isoaspartyl residues in peptides and proteins that result from spontaneous decomposition of normal L-aspartyl and L-asparaginyl residues. It plays a role in the repair and/or degradation of damaged proteins.</text>
</comment>
<comment type="catalytic activity">
    <reaction evidence="1">
        <text>[protein]-L-isoaspartate + S-adenosyl-L-methionine = [protein]-L-isoaspartate alpha-methyl ester + S-adenosyl-L-homocysteine</text>
        <dbReference type="Rhea" id="RHEA:12705"/>
        <dbReference type="Rhea" id="RHEA-COMP:12143"/>
        <dbReference type="Rhea" id="RHEA-COMP:12144"/>
        <dbReference type="ChEBI" id="CHEBI:57856"/>
        <dbReference type="ChEBI" id="CHEBI:59789"/>
        <dbReference type="ChEBI" id="CHEBI:90596"/>
        <dbReference type="ChEBI" id="CHEBI:90598"/>
        <dbReference type="EC" id="2.1.1.77"/>
    </reaction>
</comment>
<comment type="subcellular location">
    <subcellularLocation>
        <location evidence="1">Cytoplasm</location>
    </subcellularLocation>
</comment>
<comment type="similarity">
    <text evidence="1">Belongs to the methyltransferase superfamily. L-isoaspartyl/D-aspartyl protein methyltransferase family.</text>
</comment>
<feature type="chain" id="PRO_1000093295" description="Protein-L-isoaspartate O-methyltransferase">
    <location>
        <begin position="1"/>
        <end position="207"/>
    </location>
</feature>
<feature type="active site" evidence="1">
    <location>
        <position position="56"/>
    </location>
</feature>
<sequence>MAHRLVEELVREGVIKSESVRRAMLAVPREEFVMPEYRMMAYEDRPLPLFADATISAPHMVAMMCELVEPKPGMKILEVGAGSGYQAAVCAEAMERRGRVYTVEIVKELAIYAAQNIERLGYWGVVEVYHGDGRSGLERHAPFDAIIVTAAARQIPPALVRQLKEGGTLVIPLVEHMGQILYKVTKRGERVEKRAVTYVLFVPLRES</sequence>
<name>PIMT_PYRNV</name>
<protein>
    <recommendedName>
        <fullName evidence="1">Protein-L-isoaspartate O-methyltransferase</fullName>
        <ecNumber evidence="1">2.1.1.77</ecNumber>
    </recommendedName>
    <alternativeName>
        <fullName evidence="1">L-isoaspartyl protein carboxyl methyltransferase</fullName>
    </alternativeName>
    <alternativeName>
        <fullName evidence="1">Protein L-isoaspartyl methyltransferase</fullName>
    </alternativeName>
    <alternativeName>
        <fullName evidence="1">Protein-beta-aspartate methyltransferase</fullName>
        <shortName evidence="1">PIMT</shortName>
    </alternativeName>
</protein>
<organism>
    <name type="scientific">Pyrobaculum neutrophilum (strain DSM 2338 / JCM 9278 / NBRC 100436 / V24Sta)</name>
    <name type="common">Thermoproteus neutrophilus</name>
    <dbReference type="NCBI Taxonomy" id="444157"/>
    <lineage>
        <taxon>Archaea</taxon>
        <taxon>Thermoproteota</taxon>
        <taxon>Thermoprotei</taxon>
        <taxon>Thermoproteales</taxon>
        <taxon>Thermoproteaceae</taxon>
        <taxon>Pyrobaculum</taxon>
    </lineage>
</organism>
<reference key="1">
    <citation type="submission" date="2008-03" db="EMBL/GenBank/DDBJ databases">
        <title>Complete sequence of Thermoproteus neutrophilus V24Sta.</title>
        <authorList>
            <consortium name="US DOE Joint Genome Institute"/>
            <person name="Copeland A."/>
            <person name="Lucas S."/>
            <person name="Lapidus A."/>
            <person name="Glavina del Rio T."/>
            <person name="Dalin E."/>
            <person name="Tice H."/>
            <person name="Bruce D."/>
            <person name="Goodwin L."/>
            <person name="Pitluck S."/>
            <person name="Sims D."/>
            <person name="Brettin T."/>
            <person name="Detter J.C."/>
            <person name="Han C."/>
            <person name="Kuske C.R."/>
            <person name="Schmutz J."/>
            <person name="Larimer F."/>
            <person name="Land M."/>
            <person name="Hauser L."/>
            <person name="Kyrpides N."/>
            <person name="Mikhailova N."/>
            <person name="Biddle J.F."/>
            <person name="Zhang Z."/>
            <person name="Fitz-Gibbon S.T."/>
            <person name="Lowe T.M."/>
            <person name="Saltikov C."/>
            <person name="House C.H."/>
            <person name="Richardson P."/>
        </authorList>
    </citation>
    <scope>NUCLEOTIDE SEQUENCE [LARGE SCALE GENOMIC DNA]</scope>
    <source>
        <strain>DSM 2338 / JCM 9278 / NBRC 100436 / V24Sta</strain>
    </source>
</reference>
<keyword id="KW-0963">Cytoplasm</keyword>
<keyword id="KW-0489">Methyltransferase</keyword>
<keyword id="KW-0949">S-adenosyl-L-methionine</keyword>
<keyword id="KW-0808">Transferase</keyword>
<proteinExistence type="inferred from homology"/>
<accession>B1YC47</accession>
<gene>
    <name evidence="1" type="primary">pcm</name>
    <name type="ordered locus">Tneu_1986</name>
</gene>